<sequence length="500" mass="54523">MSHHSSWRGHHCAPGDNNCTAGFKESLGSKNYKLLHVPFHGPTHSHHHEPPHPFPTVDVPDHAHYIIGAVILIVGITGVIGNALVIYVFCRSRTLRTAGNMFVVNLAVADFFMSLTQSPVFFAASLHRRWIFGERICELYAFCGALFGICSMMTLTAIAADRCLAITQPLALVGNVSRRKAGAVLAVVWLYSLGWSLPPFFGWSAYVPEGLQTSCSWDYMTFTPSVRAYTILLFIFVFFIPLGIIVSCYVGIFQAIRAMGKEIRELDCGETQKVYERMQNEWKMAKIALLVILLFVISWSPYSVVALTATAGYSHLLTPYMNSVPAVIAKASAIHNPIIYAITHPKYRAAIARYIPVLRTILRVKEKELRSSFSSGSVSSRRPTLSSQCSLGVSIGNAARANGRWGKKRLSSASDSDSCWTESEADGSSVSSLTFGRRVSTEISTDTVILSPGSSNSTASGQKSEKAHKVVSVPVPSITFETDSADESLSDGKALLLGGN</sequence>
<name>OPN4_RUTRU</name>
<keyword id="KW-1003">Cell membrane</keyword>
<keyword id="KW-0157">Chromophore</keyword>
<keyword id="KW-1015">Disulfide bond</keyword>
<keyword id="KW-0297">G-protein coupled receptor</keyword>
<keyword id="KW-0325">Glycoprotein</keyword>
<keyword id="KW-0472">Membrane</keyword>
<keyword id="KW-0600">Photoreceptor protein</keyword>
<keyword id="KW-0675">Receptor</keyword>
<keyword id="KW-0681">Retinal protein</keyword>
<keyword id="KW-0716">Sensory transduction</keyword>
<keyword id="KW-0807">Transducer</keyword>
<keyword id="KW-0812">Transmembrane</keyword>
<keyword id="KW-1133">Transmembrane helix</keyword>
<organism>
    <name type="scientific">Rutilus rutilus</name>
    <name type="common">Roach</name>
    <dbReference type="NCBI Taxonomy" id="48668"/>
    <lineage>
        <taxon>Eukaryota</taxon>
        <taxon>Metazoa</taxon>
        <taxon>Chordata</taxon>
        <taxon>Craniata</taxon>
        <taxon>Vertebrata</taxon>
        <taxon>Euteleostomi</taxon>
        <taxon>Actinopterygii</taxon>
        <taxon>Neopterygii</taxon>
        <taxon>Teleostei</taxon>
        <taxon>Ostariophysi</taxon>
        <taxon>Cypriniformes</taxon>
        <taxon>Leuciscidae</taxon>
        <taxon>Leuciscinae</taxon>
        <taxon>Rutilus</taxon>
    </lineage>
</organism>
<gene>
    <name type="primary">opn4</name>
</gene>
<proteinExistence type="evidence at transcript level"/>
<comment type="function">
    <text evidence="2">Photoreceptor implicated in non-image-forming responses to light.</text>
</comment>
<comment type="subcellular location">
    <subcellularLocation>
        <location evidence="2">Cell membrane</location>
        <topology evidence="3">Multi-pass membrane protein</topology>
    </subcellularLocation>
</comment>
<comment type="tissue specificity">
    <text evidence="6">Expressed in a subset of retinal horizontal cells as well as in retinal ganglion cells.</text>
</comment>
<comment type="similarity">
    <text evidence="4">Belongs to the G-protein coupled receptor 1 family. Opsin subfamily.</text>
</comment>
<protein>
    <recommendedName>
        <fullName>Melanopsin</fullName>
    </recommendedName>
    <alternativeName>
        <fullName>Opsin-4</fullName>
    </alternativeName>
</protein>
<evidence type="ECO:0000250" key="1"/>
<evidence type="ECO:0000250" key="2">
    <source>
        <dbReference type="UniProtKB" id="Q9QXZ9"/>
    </source>
</evidence>
<evidence type="ECO:0000255" key="3"/>
<evidence type="ECO:0000255" key="4">
    <source>
        <dbReference type="PROSITE-ProRule" id="PRU00521"/>
    </source>
</evidence>
<evidence type="ECO:0000256" key="5">
    <source>
        <dbReference type="SAM" id="MobiDB-lite"/>
    </source>
</evidence>
<evidence type="ECO:0000269" key="6">
    <source>
    </source>
</evidence>
<evidence type="ECO:0000305" key="7"/>
<evidence type="ECO:0000312" key="8">
    <source>
        <dbReference type="EMBL" id="AAO38857.1"/>
    </source>
</evidence>
<reference evidence="7 8" key="1">
    <citation type="journal article" date="2003" name="Curr. Biol.">
        <title>VA opsin, melanopsin, and an inherent light response within retinal interneurons.</title>
        <authorList>
            <person name="Jenkins A."/>
            <person name="Munoz M."/>
            <person name="Tarttelin E.E."/>
            <person name="Bellingham J."/>
            <person name="Foster R.G."/>
            <person name="Hankins M.W."/>
        </authorList>
    </citation>
    <scope>NUCLEOTIDE SEQUENCE [MRNA]</scope>
    <scope>TISSUE SPECIFICITY</scope>
    <source>
        <tissue evidence="8">Retina</tissue>
    </source>
</reference>
<accession>Q6XL69</accession>
<feature type="chain" id="PRO_0000270992" description="Melanopsin">
    <location>
        <begin position="1"/>
        <end position="500"/>
    </location>
</feature>
<feature type="topological domain" description="Extracellular" evidence="3">
    <location>
        <begin position="1"/>
        <end position="65"/>
    </location>
</feature>
<feature type="transmembrane region" description="Helical; Name=1" evidence="3">
    <location>
        <begin position="66"/>
        <end position="86"/>
    </location>
</feature>
<feature type="topological domain" description="Cytoplasmic" evidence="3">
    <location>
        <begin position="87"/>
        <end position="101"/>
    </location>
</feature>
<feature type="transmembrane region" description="Helical; Name=2" evidence="3">
    <location>
        <begin position="102"/>
        <end position="122"/>
    </location>
</feature>
<feature type="topological domain" description="Extracellular" evidence="3">
    <location>
        <begin position="123"/>
        <end position="138"/>
    </location>
</feature>
<feature type="transmembrane region" description="Helical; Name=3" evidence="3">
    <location>
        <begin position="139"/>
        <end position="159"/>
    </location>
</feature>
<feature type="topological domain" description="Cytoplasmic" evidence="3">
    <location>
        <begin position="160"/>
        <end position="182"/>
    </location>
</feature>
<feature type="transmembrane region" description="Helical; Name=4" evidence="3">
    <location>
        <begin position="183"/>
        <end position="203"/>
    </location>
</feature>
<feature type="topological domain" description="Extracellular" evidence="3">
    <location>
        <begin position="204"/>
        <end position="232"/>
    </location>
</feature>
<feature type="transmembrane region" description="Helical; Name=5" evidence="3">
    <location>
        <begin position="233"/>
        <end position="253"/>
    </location>
</feature>
<feature type="topological domain" description="Cytoplasmic" evidence="3">
    <location>
        <begin position="254"/>
        <end position="286"/>
    </location>
</feature>
<feature type="transmembrane region" description="Helical; Name=6" evidence="3">
    <location>
        <begin position="287"/>
        <end position="307"/>
    </location>
</feature>
<feature type="topological domain" description="Extracellular" evidence="3">
    <location>
        <begin position="308"/>
        <end position="322"/>
    </location>
</feature>
<feature type="transmembrane region" description="Helical; Name=7" evidence="3">
    <location>
        <begin position="323"/>
        <end position="343"/>
    </location>
</feature>
<feature type="topological domain" description="Cytoplasmic" evidence="3">
    <location>
        <begin position="344"/>
        <end position="500"/>
    </location>
</feature>
<feature type="region of interest" description="Disordered" evidence="5">
    <location>
        <begin position="406"/>
        <end position="428"/>
    </location>
</feature>
<feature type="region of interest" description="Disordered" evidence="5">
    <location>
        <begin position="448"/>
        <end position="470"/>
    </location>
</feature>
<feature type="region of interest" description="Disordered" evidence="5">
    <location>
        <begin position="481"/>
        <end position="500"/>
    </location>
</feature>
<feature type="compositionally biased region" description="Polar residues" evidence="5">
    <location>
        <begin position="411"/>
        <end position="428"/>
    </location>
</feature>
<feature type="compositionally biased region" description="Polar residues" evidence="5">
    <location>
        <begin position="448"/>
        <end position="462"/>
    </location>
</feature>
<feature type="modified residue" description="N6-(retinylidene)lysine" evidence="1">
    <location>
        <position position="330"/>
    </location>
</feature>
<feature type="glycosylation site" description="N-linked (GlcNAc...) asparagine" evidence="3">
    <location>
        <position position="18"/>
    </location>
</feature>
<feature type="disulfide bond" evidence="4">
    <location>
        <begin position="137"/>
        <end position="215"/>
    </location>
</feature>
<dbReference type="EMBL" id="AY226847">
    <property type="protein sequence ID" value="AAO38857.1"/>
    <property type="molecule type" value="mRNA"/>
</dbReference>
<dbReference type="SMR" id="Q6XL69"/>
<dbReference type="GlyCosmos" id="Q6XL69">
    <property type="glycosylation" value="1 site, No reported glycans"/>
</dbReference>
<dbReference type="GO" id="GO:0005886">
    <property type="term" value="C:plasma membrane"/>
    <property type="evidence" value="ECO:0000250"/>
    <property type="project" value="UniProtKB"/>
</dbReference>
<dbReference type="GO" id="GO:0004930">
    <property type="term" value="F:G protein-coupled receptor activity"/>
    <property type="evidence" value="ECO:0007669"/>
    <property type="project" value="UniProtKB-KW"/>
</dbReference>
<dbReference type="GO" id="GO:0009881">
    <property type="term" value="F:photoreceptor activity"/>
    <property type="evidence" value="ECO:0007669"/>
    <property type="project" value="UniProtKB-KW"/>
</dbReference>
<dbReference type="GO" id="GO:0007602">
    <property type="term" value="P:phototransduction"/>
    <property type="evidence" value="ECO:0007669"/>
    <property type="project" value="UniProtKB-KW"/>
</dbReference>
<dbReference type="GO" id="GO:0007601">
    <property type="term" value="P:visual perception"/>
    <property type="evidence" value="ECO:0007669"/>
    <property type="project" value="InterPro"/>
</dbReference>
<dbReference type="CDD" id="cd15336">
    <property type="entry name" value="7tmA_Melanopsin"/>
    <property type="match status" value="1"/>
</dbReference>
<dbReference type="FunFam" id="1.20.1070.10:FF:000044">
    <property type="entry name" value="Opsin, ultraviolet-sensitive"/>
    <property type="match status" value="1"/>
</dbReference>
<dbReference type="Gene3D" id="1.20.1070.10">
    <property type="entry name" value="Rhodopsin 7-helix transmembrane proteins"/>
    <property type="match status" value="1"/>
</dbReference>
<dbReference type="InterPro" id="IPR050125">
    <property type="entry name" value="GPCR_opsins"/>
</dbReference>
<dbReference type="InterPro" id="IPR000276">
    <property type="entry name" value="GPCR_Rhodpsn"/>
</dbReference>
<dbReference type="InterPro" id="IPR017452">
    <property type="entry name" value="GPCR_Rhodpsn_7TM"/>
</dbReference>
<dbReference type="InterPro" id="IPR001760">
    <property type="entry name" value="Opsin"/>
</dbReference>
<dbReference type="InterPro" id="IPR027430">
    <property type="entry name" value="Retinal_BS"/>
</dbReference>
<dbReference type="PANTHER" id="PTHR24240">
    <property type="entry name" value="OPSIN"/>
    <property type="match status" value="1"/>
</dbReference>
<dbReference type="Pfam" id="PF00001">
    <property type="entry name" value="7tm_1"/>
    <property type="match status" value="1"/>
</dbReference>
<dbReference type="PRINTS" id="PR00237">
    <property type="entry name" value="GPCRRHODOPSN"/>
</dbReference>
<dbReference type="PRINTS" id="PR00238">
    <property type="entry name" value="OPSIN"/>
</dbReference>
<dbReference type="SMART" id="SM01381">
    <property type="entry name" value="7TM_GPCR_Srsx"/>
    <property type="match status" value="1"/>
</dbReference>
<dbReference type="SUPFAM" id="SSF81321">
    <property type="entry name" value="Family A G protein-coupled receptor-like"/>
    <property type="match status" value="1"/>
</dbReference>
<dbReference type="PROSITE" id="PS00237">
    <property type="entry name" value="G_PROTEIN_RECEP_F1_1"/>
    <property type="match status" value="1"/>
</dbReference>
<dbReference type="PROSITE" id="PS50262">
    <property type="entry name" value="G_PROTEIN_RECEP_F1_2"/>
    <property type="match status" value="1"/>
</dbReference>
<dbReference type="PROSITE" id="PS00238">
    <property type="entry name" value="OPSIN"/>
    <property type="match status" value="1"/>
</dbReference>